<keyword id="KW-0472">Membrane</keyword>
<keyword id="KW-0602">Photosynthesis</keyword>
<keyword id="KW-1185">Reference proteome</keyword>
<keyword id="KW-0677">Repeat</keyword>
<keyword id="KW-0793">Thylakoid</keyword>
<keyword id="KW-0802">TPR repeat</keyword>
<accession>Q2JJK6</accession>
<feature type="chain" id="PRO_1000025969" description="Photosystem I assembly protein Ycf3">
    <location>
        <begin position="1"/>
        <end position="173"/>
    </location>
</feature>
<feature type="repeat" description="TPR 1">
    <location>
        <begin position="36"/>
        <end position="69"/>
    </location>
</feature>
<feature type="repeat" description="TPR 2">
    <location>
        <begin position="73"/>
        <end position="106"/>
    </location>
</feature>
<feature type="repeat" description="TPR 3">
    <location>
        <begin position="121"/>
        <end position="154"/>
    </location>
</feature>
<sequence>MPRSMKNDNFIDKTFTVMADLILKLLPGVSSEQKKAFAYYRDGMAAQSEGEYAEALENYREALALEQGEEDRSYILYNMGLIYQSNGELDKALEYYHQALELNPRLCSALNNIAVLLHHKGELSLQAGDEETAEALFNEAAQYWIRAIRIAPNNYIEAQNWLKTTGRANLEVY</sequence>
<reference key="1">
    <citation type="journal article" date="2007" name="ISME J.">
        <title>Population level functional diversity in a microbial community revealed by comparative genomic and metagenomic analyses.</title>
        <authorList>
            <person name="Bhaya D."/>
            <person name="Grossman A.R."/>
            <person name="Steunou A.-S."/>
            <person name="Khuri N."/>
            <person name="Cohan F.M."/>
            <person name="Hamamura N."/>
            <person name="Melendrez M.C."/>
            <person name="Bateson M.M."/>
            <person name="Ward D.M."/>
            <person name="Heidelberg J.F."/>
        </authorList>
    </citation>
    <scope>NUCLEOTIDE SEQUENCE [LARGE SCALE GENOMIC DNA]</scope>
    <source>
        <strain>JA-2-3B'a(2-13)</strain>
    </source>
</reference>
<name>YCF3_SYNJB</name>
<protein>
    <recommendedName>
        <fullName evidence="1">Photosystem I assembly protein Ycf3</fullName>
    </recommendedName>
</protein>
<gene>
    <name evidence="1" type="primary">ycf3</name>
    <name type="ordered locus">CYB_2216</name>
</gene>
<dbReference type="EMBL" id="CP000240">
    <property type="protein sequence ID" value="ABD03161.1"/>
    <property type="molecule type" value="Genomic_DNA"/>
</dbReference>
<dbReference type="RefSeq" id="WP_011433796.1">
    <property type="nucleotide sequence ID" value="NC_007776.1"/>
</dbReference>
<dbReference type="SMR" id="Q2JJK6"/>
<dbReference type="STRING" id="321332.CYB_2216"/>
<dbReference type="KEGG" id="cyb:CYB_2216"/>
<dbReference type="eggNOG" id="COG0457">
    <property type="taxonomic scope" value="Bacteria"/>
</dbReference>
<dbReference type="HOGENOM" id="CLU_141248_0_0_3"/>
<dbReference type="OrthoDB" id="9429505at2"/>
<dbReference type="Proteomes" id="UP000001938">
    <property type="component" value="Chromosome"/>
</dbReference>
<dbReference type="GO" id="GO:0031676">
    <property type="term" value="C:plasma membrane-derived thylakoid membrane"/>
    <property type="evidence" value="ECO:0007669"/>
    <property type="project" value="UniProtKB-SubCell"/>
</dbReference>
<dbReference type="GO" id="GO:0015979">
    <property type="term" value="P:photosynthesis"/>
    <property type="evidence" value="ECO:0007669"/>
    <property type="project" value="UniProtKB-UniRule"/>
</dbReference>
<dbReference type="Gene3D" id="1.25.40.10">
    <property type="entry name" value="Tetratricopeptide repeat domain"/>
    <property type="match status" value="1"/>
</dbReference>
<dbReference type="HAMAP" id="MF_00439">
    <property type="entry name" value="Ycf3"/>
    <property type="match status" value="1"/>
</dbReference>
<dbReference type="InterPro" id="IPR052346">
    <property type="entry name" value="O-mannosyl-transferase_TMTC"/>
</dbReference>
<dbReference type="InterPro" id="IPR022818">
    <property type="entry name" value="PSI_Ycf3_assembly"/>
</dbReference>
<dbReference type="InterPro" id="IPR011990">
    <property type="entry name" value="TPR-like_helical_dom_sf"/>
</dbReference>
<dbReference type="InterPro" id="IPR019734">
    <property type="entry name" value="TPR_rpt"/>
</dbReference>
<dbReference type="NCBIfam" id="NF002725">
    <property type="entry name" value="PRK02603.1"/>
    <property type="match status" value="1"/>
</dbReference>
<dbReference type="PANTHER" id="PTHR44227">
    <property type="match status" value="1"/>
</dbReference>
<dbReference type="PANTHER" id="PTHR44227:SF3">
    <property type="entry name" value="PROTEIN O-MANNOSYL-TRANSFERASE TMTC4"/>
    <property type="match status" value="1"/>
</dbReference>
<dbReference type="Pfam" id="PF00515">
    <property type="entry name" value="TPR_1"/>
    <property type="match status" value="1"/>
</dbReference>
<dbReference type="Pfam" id="PF13181">
    <property type="entry name" value="TPR_8"/>
    <property type="match status" value="1"/>
</dbReference>
<dbReference type="SMART" id="SM00028">
    <property type="entry name" value="TPR"/>
    <property type="match status" value="3"/>
</dbReference>
<dbReference type="SUPFAM" id="SSF48452">
    <property type="entry name" value="TPR-like"/>
    <property type="match status" value="1"/>
</dbReference>
<dbReference type="PROSITE" id="PS50005">
    <property type="entry name" value="TPR"/>
    <property type="match status" value="3"/>
</dbReference>
<dbReference type="PROSITE" id="PS50293">
    <property type="entry name" value="TPR_REGION"/>
    <property type="match status" value="1"/>
</dbReference>
<proteinExistence type="inferred from homology"/>
<evidence type="ECO:0000255" key="1">
    <source>
        <dbReference type="HAMAP-Rule" id="MF_00439"/>
    </source>
</evidence>
<comment type="function">
    <text evidence="1">Essential for the assembly of the photosystem I (PSI) complex. May act as a chaperone-like factor to guide the assembly of the PSI subunits.</text>
</comment>
<comment type="subcellular location">
    <subcellularLocation>
        <location evidence="1">Cellular thylakoid membrane</location>
        <topology evidence="1">Peripheral membrane protein</topology>
    </subcellularLocation>
</comment>
<comment type="similarity">
    <text evidence="1">Belongs to the Ycf3 family.</text>
</comment>
<organism>
    <name type="scientific">Synechococcus sp. (strain JA-2-3B'a(2-13))</name>
    <name type="common">Cyanobacteria bacterium Yellowstone B-Prime</name>
    <dbReference type="NCBI Taxonomy" id="321332"/>
    <lineage>
        <taxon>Bacteria</taxon>
        <taxon>Bacillati</taxon>
        <taxon>Cyanobacteriota</taxon>
        <taxon>Cyanophyceae</taxon>
        <taxon>Synechococcales</taxon>
        <taxon>Synechococcaceae</taxon>
        <taxon>Synechococcus</taxon>
    </lineage>
</organism>